<keyword id="KW-1185">Reference proteome</keyword>
<reference key="1">
    <citation type="journal article" date="2016" name="Genome Announc.">
        <title>Draft genome sequences of fungus Aspergillus calidoustus.</title>
        <authorList>
            <person name="Horn F."/>
            <person name="Linde J."/>
            <person name="Mattern D.J."/>
            <person name="Walther G."/>
            <person name="Guthke R."/>
            <person name="Scherlach K."/>
            <person name="Martin K."/>
            <person name="Brakhage A.A."/>
            <person name="Petzke L."/>
            <person name="Valiante V."/>
        </authorList>
    </citation>
    <scope>NUCLEOTIDE SEQUENCE [LARGE SCALE GENOMIC DNA]</scope>
    <source>
        <strain>SF006504</strain>
    </source>
</reference>
<reference key="2">
    <citation type="journal article" date="2017" name="ACS Chem. Biol.">
        <title>Discovery of an Extended Austinoid Biosynthetic Pathway in Aspergillus calidoustus.</title>
        <authorList>
            <person name="Valiante V."/>
            <person name="Mattern D.J."/>
            <person name="Schueffler A."/>
            <person name="Horn F."/>
            <person name="Walther G."/>
            <person name="Scherlach K."/>
            <person name="Petzke L."/>
            <person name="Dickhaut J."/>
            <person name="Guthke R."/>
            <person name="Hertweck C."/>
            <person name="Nett M."/>
            <person name="Thines E."/>
            <person name="Brakhage A.A."/>
        </authorList>
    </citation>
    <scope>FUNCTION</scope>
    <scope>PATHWAY</scope>
</reference>
<reference key="3">
    <citation type="journal article" date="2017" name="ACS Chem. Biol.">
        <title>Rewiring of the austinoid biosynthetic pathway in filamentous fungi.</title>
        <authorList>
            <person name="Mattern D.J."/>
            <person name="Valiante V."/>
            <person name="Horn F."/>
            <person name="Petzke L."/>
            <person name="Brakhage A.A."/>
        </authorList>
    </citation>
    <scope>FUNCTION</scope>
</reference>
<accession>A0A0U5GMR5</accession>
<feature type="chain" id="PRO_0000453832" description="Austinoid biosynthesis cluster protein J">
    <location>
        <begin position="1"/>
        <end position="165"/>
    </location>
</feature>
<evidence type="ECO:0000250" key="1">
    <source>
        <dbReference type="UniProtKB" id="C8VQ92"/>
    </source>
</evidence>
<evidence type="ECO:0000250" key="2">
    <source>
        <dbReference type="UniProtKB" id="Q5AR31"/>
    </source>
</evidence>
<evidence type="ECO:0000269" key="3">
    <source>
    </source>
</evidence>
<evidence type="ECO:0000269" key="4">
    <source>
    </source>
</evidence>
<evidence type="ECO:0000303" key="5">
    <source>
    </source>
</evidence>
<evidence type="ECO:0000305" key="6"/>
<evidence type="ECO:0000305" key="7">
    <source>
    </source>
</evidence>
<evidence type="ECO:0000305" key="8">
    <source>
    </source>
</evidence>
<proteinExistence type="inferred from homology"/>
<dbReference type="EMBL" id="CDMC01000024">
    <property type="protein sequence ID" value="CEL11263.1"/>
    <property type="molecule type" value="Genomic_DNA"/>
</dbReference>
<dbReference type="SMR" id="A0A0U5GMR5"/>
<dbReference type="STRING" id="454130.A0A0U5GMR5"/>
<dbReference type="OMA" id="NEYMIVL"/>
<dbReference type="OrthoDB" id="3758478at2759"/>
<dbReference type="UniPathway" id="UPA00213"/>
<dbReference type="Proteomes" id="UP000054771">
    <property type="component" value="Unassembled WGS sequence"/>
</dbReference>
<dbReference type="GO" id="GO:0016114">
    <property type="term" value="P:terpenoid biosynthetic process"/>
    <property type="evidence" value="ECO:0007669"/>
    <property type="project" value="UniProtKB-UniPathway"/>
</dbReference>
<dbReference type="FunFam" id="3.10.450.50:FF:000062">
    <property type="entry name" value="Austinol synthesis protein F"/>
    <property type="match status" value="1"/>
</dbReference>
<dbReference type="Gene3D" id="3.10.450.50">
    <property type="match status" value="1"/>
</dbReference>
<dbReference type="InterPro" id="IPR050977">
    <property type="entry name" value="Fungal_Meroterpenoid_Isomerase"/>
</dbReference>
<dbReference type="PANTHER" id="PTHR39598:SF1">
    <property type="entry name" value="AUSTINOID BIOSYNTHESIS CLUSTERS PROTEIN F-RELATED"/>
    <property type="match status" value="1"/>
</dbReference>
<dbReference type="PANTHER" id="PTHR39598">
    <property type="entry name" value="AUSTINOL SYNTHESIS PROTEIN F-RELATED"/>
    <property type="match status" value="1"/>
</dbReference>
<gene>
    <name evidence="5" type="primary">ausJ</name>
    <name type="ORF">ASPCAL14366</name>
</gene>
<organism>
    <name type="scientific">Aspergillus calidoustus</name>
    <dbReference type="NCBI Taxonomy" id="454130"/>
    <lineage>
        <taxon>Eukaryota</taxon>
        <taxon>Fungi</taxon>
        <taxon>Dikarya</taxon>
        <taxon>Ascomycota</taxon>
        <taxon>Pezizomycotina</taxon>
        <taxon>Eurotiomycetes</taxon>
        <taxon>Eurotiomycetidae</taxon>
        <taxon>Eurotiales</taxon>
        <taxon>Aspergillaceae</taxon>
        <taxon>Aspergillus</taxon>
        <taxon>Aspergillus subgen. Nidulantes</taxon>
    </lineage>
</organism>
<sequence length="165" mass="18832">MTTTRHRLLATASRFVTTLESLDVDAMLAVRSPTCLHHMCLPSFRNYSITNDQTREAFPQWKATITKYQFGILDDSQTLVDEQARKVMIRAKTAAETTVGDYNNEYVFILRMTEDCDTVDEIWEFYDSLRLRDLHHRLEGGHVPIGVDAPAPFTTTGSNSLDRSK</sequence>
<name>AUSJ_ASPCI</name>
<protein>
    <recommendedName>
        <fullName evidence="5">Austinoid biosynthesis cluster protein J</fullName>
    </recommendedName>
</protein>
<comment type="function">
    <text evidence="1 3 4">Part of the gene cluster that mediates the biosynthesis of calidodehydroaustin, a fungal meroterpenoid (PubMed:28233494, PubMed:29076725). The first step of the pathway is the synthesis of 3,5-dimethylorsellinic acid by the polyketide synthase ausA (PubMed:28233494). 3,5-dimethylorsellinic acid is then prenylated by the polyprenyl transferase ausN (PubMed:28233494). Further epoxidation by the FAD-dependent monooxygenase ausM and cyclization by the probable terpene cyclase ausL lead to the formation of protoaustinoid A (By similarity). Protoaustinoid A is then oxidized to spiro-lactone preaustinoid A3 by the combined action of the FAD-binding monooxygenases ausB and ausC, and the dioxygenase ausE (By similarity). Acid-catalyzed keto-rearrangement and ring contraction of the tetraketide portion of preaustinoid A3 by ausJ lead to the formation of preaustinoid A4 (By similarity). The aldo-keto reductase ausK, with the help of ausH, is involved in the next step by transforming preaustinoid A4 into isoaustinone which is in turn hydroxylated by the P450 monooxygenase ausI to form austinolide (By similarity). The cytochrome P450 monooxygenase ausG modifies austinolide to austinol (By similarity). Austinol is further acetylated to austin by the O-acetyltransferase ausP, which spontaneously changes to dehydroaustin (PubMed:28233494). The cytochrome P450 monooxygenase ausR then converts dehydroaustin is into 7-dehydrodehydroaustin (PubMed:28233494). The hydroxylation catalyzed by ausR permits the O-acetyltransferase ausQ to add an additional acetyl group to the molecule, leading to the formation of acetoxydehydroaustin (PubMed:28233494). The short chain dehydrogenase ausT catalyzes the reduction of the double bond present between carbon atoms 1 and 2 to convert 7-dehydrodehydroaustin into 1,2-dihydro-7-hydroxydehydroaustin (PubMed:28233494). AusQ catalyzes not only an acetylation reaction but also the addition of the PKS ausV diketide product to 1,2-dihydro-7-hydroxydehydroaustin, forming precalidodehydroaustin (PubMed:28233494). Finally, the iron/alpha-ketoglutarate-dependent dioxygenase converts precalidodehydroaustin into calidodehydroaustin (PubMed:28233494).</text>
</comment>
<comment type="pathway">
    <text evidence="7">Secondary metabolite biosynthesis; terpenoid biosynthesis.</text>
</comment>
<comment type="subunit">
    <text evidence="2">Homodimer.</text>
</comment>
<comment type="miscellaneous">
    <text evidence="8">In A.calidoustus, the austinoid gene cluster lies on a contiguous DNA region, while clusters from E.nidulans and P.brasilianum are split in their respective genomes. Genetic rearrangements provoked variability among the clusters and E.nidulans produces the least number of austionoid derivatives with the end products austinol and dehydroaustinol, while P.brasilianum can produce until acetoxydehydroaustin, and A.calidoustus produces the highest number of identified derivatives.</text>
</comment>
<comment type="similarity">
    <text evidence="6">Belongs to the trt14 isomerase family.</text>
</comment>